<evidence type="ECO:0000250" key="1">
    <source>
        <dbReference type="UniProtKB" id="A0A2I4HXH5"/>
    </source>
</evidence>
<evidence type="ECO:0000250" key="2">
    <source>
        <dbReference type="UniProtKB" id="P0DJJ5"/>
    </source>
</evidence>
<evidence type="ECO:0000250" key="3">
    <source>
        <dbReference type="UniProtKB" id="P21589"/>
    </source>
</evidence>
<evidence type="ECO:0000250" key="4">
    <source>
        <dbReference type="UniProtKB" id="W8EFS0"/>
    </source>
</evidence>
<evidence type="ECO:0000255" key="5"/>
<evidence type="ECO:0000305" key="6"/>
<evidence type="ECO:0000305" key="7">
    <source>
    </source>
</evidence>
<protein>
    <recommendedName>
        <fullName evidence="4">Snake venom 5'-nucleotidase</fullName>
        <shortName evidence="4">5'-NT</shortName>
        <ecNumber evidence="2">3.1.3.5</ecNumber>
    </recommendedName>
    <alternativeName>
        <fullName evidence="2">Ecto-5'-nucleotidase</fullName>
    </alternativeName>
</protein>
<comment type="function">
    <text evidence="2 7">Hydrolyzes nucleotides into nucleosides (By similarity). Snake venom 5'-nucleotidases are widely distributed among venomous snake taxa, but there is a lack of information about their biological activities. They have been shown to inhibit platelet aggregation. This effect may be due to the liberation of inhibitory AMP or adenosine by its action on ADP released upon initiation of aggregation. Venom 5'-nucleotidases are also known to synergistically act in vivo with other toxins like ADPases, phospholipases, and disintegrins to exert a more pronounced anti-coagulant effect.</text>
</comment>
<comment type="catalytic activity">
    <reaction evidence="2">
        <text>a ribonucleoside 5'-phosphate + H2O = a ribonucleoside + phosphate</text>
        <dbReference type="Rhea" id="RHEA:12484"/>
        <dbReference type="ChEBI" id="CHEBI:15377"/>
        <dbReference type="ChEBI" id="CHEBI:18254"/>
        <dbReference type="ChEBI" id="CHEBI:43474"/>
        <dbReference type="ChEBI" id="CHEBI:58043"/>
        <dbReference type="EC" id="3.1.3.5"/>
    </reaction>
</comment>
<comment type="cofactor">
    <cofactor evidence="3">
        <name>Zn(2+)</name>
        <dbReference type="ChEBI" id="CHEBI:29105"/>
    </cofactor>
</comment>
<comment type="subcellular location">
    <subcellularLocation>
        <location evidence="2">Membrane</location>
        <topology evidence="3">Lipid-anchor</topology>
        <topology evidence="3">GPI-anchor</topology>
    </subcellularLocation>
</comment>
<comment type="tissue specificity">
    <text>Expressed by the venom gland.</text>
</comment>
<comment type="PTM">
    <text>Venom 5'-nucleotidases (or a part thereof) may be released into the venom via exosome-like vesicles. They may be attached via a GPI anchor to the membrane of these vesicles. Soluble forms of 5'-nucleotidase might be released by cleavage of the ectodomain in the exosome-like vesicles or venom gland cells.</text>
</comment>
<comment type="similarity">
    <text evidence="6">Belongs to the 5'-nucleotidase family.</text>
</comment>
<accession>F8S0Z7</accession>
<accession>J3S3V4</accession>
<dbReference type="EC" id="3.1.3.5" evidence="2"/>
<dbReference type="EMBL" id="JU173671">
    <property type="protein sequence ID" value="AFJ49197.1"/>
    <property type="molecule type" value="mRNA"/>
</dbReference>
<dbReference type="EMBL" id="HQ414101">
    <property type="protein sequence ID" value="AEJ31979.1"/>
    <property type="molecule type" value="mRNA"/>
</dbReference>
<dbReference type="SMR" id="F8S0Z7"/>
<dbReference type="GO" id="GO:0005886">
    <property type="term" value="C:plasma membrane"/>
    <property type="evidence" value="ECO:0007669"/>
    <property type="project" value="TreeGrafter"/>
</dbReference>
<dbReference type="GO" id="GO:0098552">
    <property type="term" value="C:side of membrane"/>
    <property type="evidence" value="ECO:0007669"/>
    <property type="project" value="UniProtKB-KW"/>
</dbReference>
<dbReference type="GO" id="GO:0008253">
    <property type="term" value="F:5'-nucleotidase activity"/>
    <property type="evidence" value="ECO:0007669"/>
    <property type="project" value="UniProtKB-EC"/>
</dbReference>
<dbReference type="GO" id="GO:0046872">
    <property type="term" value="F:metal ion binding"/>
    <property type="evidence" value="ECO:0007669"/>
    <property type="project" value="UniProtKB-KW"/>
</dbReference>
<dbReference type="GO" id="GO:0000166">
    <property type="term" value="F:nucleotide binding"/>
    <property type="evidence" value="ECO:0007669"/>
    <property type="project" value="UniProtKB-KW"/>
</dbReference>
<dbReference type="GO" id="GO:0006196">
    <property type="term" value="P:AMP catabolic process"/>
    <property type="evidence" value="ECO:0007669"/>
    <property type="project" value="TreeGrafter"/>
</dbReference>
<dbReference type="CDD" id="cd07409">
    <property type="entry name" value="MPP_CD73_N"/>
    <property type="match status" value="1"/>
</dbReference>
<dbReference type="FunFam" id="3.90.780.10:FF:000001">
    <property type="entry name" value="NT5E isoform 3"/>
    <property type="match status" value="1"/>
</dbReference>
<dbReference type="FunFam" id="3.60.21.10:FF:000020">
    <property type="entry name" value="NT5E isoform 4"/>
    <property type="match status" value="1"/>
</dbReference>
<dbReference type="Gene3D" id="3.60.21.10">
    <property type="match status" value="1"/>
</dbReference>
<dbReference type="Gene3D" id="3.90.780.10">
    <property type="entry name" value="5'-Nucleotidase, C-terminal domain"/>
    <property type="match status" value="1"/>
</dbReference>
<dbReference type="InterPro" id="IPR008334">
    <property type="entry name" value="5'-Nucleotdase_C"/>
</dbReference>
<dbReference type="InterPro" id="IPR036907">
    <property type="entry name" value="5'-Nucleotdase_C_sf"/>
</dbReference>
<dbReference type="InterPro" id="IPR006146">
    <property type="entry name" value="5'-Nucleotdase_CS"/>
</dbReference>
<dbReference type="InterPro" id="IPR006179">
    <property type="entry name" value="5_nucleotidase/apyrase"/>
</dbReference>
<dbReference type="InterPro" id="IPR004843">
    <property type="entry name" value="Calcineurin-like_PHP_ApaH"/>
</dbReference>
<dbReference type="InterPro" id="IPR029052">
    <property type="entry name" value="Metallo-depent_PP-like"/>
</dbReference>
<dbReference type="PANTHER" id="PTHR11575:SF24">
    <property type="entry name" value="5'-NUCLEOTIDASE"/>
    <property type="match status" value="1"/>
</dbReference>
<dbReference type="PANTHER" id="PTHR11575">
    <property type="entry name" value="5'-NUCLEOTIDASE-RELATED"/>
    <property type="match status" value="1"/>
</dbReference>
<dbReference type="Pfam" id="PF02872">
    <property type="entry name" value="5_nucleotid_C"/>
    <property type="match status" value="1"/>
</dbReference>
<dbReference type="Pfam" id="PF00149">
    <property type="entry name" value="Metallophos"/>
    <property type="match status" value="1"/>
</dbReference>
<dbReference type="PRINTS" id="PR01607">
    <property type="entry name" value="APYRASEFAMLY"/>
</dbReference>
<dbReference type="SUPFAM" id="SSF55816">
    <property type="entry name" value="5'-nucleotidase (syn. UDP-sugar hydrolase), C-terminal domain"/>
    <property type="match status" value="1"/>
</dbReference>
<dbReference type="SUPFAM" id="SSF56300">
    <property type="entry name" value="Metallo-dependent phosphatases"/>
    <property type="match status" value="1"/>
</dbReference>
<dbReference type="PROSITE" id="PS00785">
    <property type="entry name" value="5_NUCLEOTIDASE_1"/>
    <property type="match status" value="1"/>
</dbReference>
<dbReference type="PROSITE" id="PS00786">
    <property type="entry name" value="5_NUCLEOTIDASE_2"/>
    <property type="match status" value="1"/>
</dbReference>
<proteinExistence type="evidence at protein level"/>
<name>V5NTD_CROAD</name>
<organism>
    <name type="scientific">Crotalus adamanteus</name>
    <name type="common">Eastern diamondback rattlesnake</name>
    <dbReference type="NCBI Taxonomy" id="8729"/>
    <lineage>
        <taxon>Eukaryota</taxon>
        <taxon>Metazoa</taxon>
        <taxon>Chordata</taxon>
        <taxon>Craniata</taxon>
        <taxon>Vertebrata</taxon>
        <taxon>Euteleostomi</taxon>
        <taxon>Lepidosauria</taxon>
        <taxon>Squamata</taxon>
        <taxon>Bifurcata</taxon>
        <taxon>Unidentata</taxon>
        <taxon>Episquamata</taxon>
        <taxon>Toxicofera</taxon>
        <taxon>Serpentes</taxon>
        <taxon>Colubroidea</taxon>
        <taxon>Viperidae</taxon>
        <taxon>Crotalinae</taxon>
        <taxon>Crotalus</taxon>
    </lineage>
</organism>
<reference key="1">
    <citation type="journal article" date="2012" name="BMC Genomics">
        <title>The venom-gland transcriptome of the eastern diamondback rattlesnake (Crotalus adamanteus).</title>
        <authorList>
            <person name="Rokyta D.R."/>
            <person name="Lemmon A.R."/>
            <person name="Margres M.J."/>
            <person name="Aronow K."/>
        </authorList>
    </citation>
    <scope>NUCLEOTIDE SEQUENCE [MRNA]</scope>
    <source>
        <tissue>Venom gland</tissue>
    </source>
</reference>
<reference key="2">
    <citation type="journal article" date="2011" name="Toxicon">
        <title>A high-throughput venom-gland transcriptome for the eastern diamondback rattlesnake (Crotalus adamanteus) and evidence for pervasive positive selection across toxin classes.</title>
        <authorList>
            <person name="Rokyta D.R."/>
            <person name="Wray K.P."/>
            <person name="Lemmon A.R."/>
            <person name="Lemmon E.M."/>
            <person name="Caudle S.B."/>
        </authorList>
    </citation>
    <scope>NUCLEOTIDE SEQUENCE [MRNA] OF 63-588</scope>
    <source>
        <tissue>Venom gland</tissue>
    </source>
</reference>
<reference key="3">
    <citation type="journal article" date="2014" name="J. Proteomics">
        <title>Linking the transcriptome and proteome to characterize the venom of the eastern diamondback rattlesnake (Crotalus adamanteus).</title>
        <authorList>
            <person name="Margres M.J."/>
            <person name="McGivern J.J."/>
            <person name="Wray K.P."/>
            <person name="Seavy M."/>
            <person name="Calvin K."/>
            <person name="Rokyta D.R."/>
        </authorList>
    </citation>
    <scope>IDENTIFICATION BY MASS SPECTROMETRY</scope>
    <source>
        <tissue>Venom</tissue>
    </source>
</reference>
<reference key="4">
    <citation type="journal article" date="2010" name="Cell Biochem. Funct.">
        <title>The pharmacological role of nucleotidases in snake venoms.</title>
        <authorList>
            <person name="Dhananjaya B.L."/>
            <person name="D'Souza C.J."/>
        </authorList>
    </citation>
    <scope>REVIEW</scope>
    <scope>FUNCTION</scope>
</reference>
<feature type="signal peptide" evidence="5">
    <location>
        <begin position="1"/>
        <end position="40"/>
    </location>
</feature>
<feature type="chain" id="PRO_0000418208" description="Snake venom 5'-nucleotidase">
    <location>
        <begin position="41"/>
        <end position="564"/>
    </location>
</feature>
<feature type="propeptide" id="PRO_0000418209" description="Removed in mature form" evidence="3">
    <location>
        <begin position="565"/>
        <end position="588"/>
    </location>
</feature>
<feature type="binding site" evidence="1">
    <location>
        <position position="51"/>
    </location>
    <ligand>
        <name>Zn(2+)</name>
        <dbReference type="ChEBI" id="CHEBI:29105"/>
        <label>1</label>
    </ligand>
</feature>
<feature type="binding site" evidence="3">
    <location>
        <position position="51"/>
    </location>
    <ligand>
        <name>Zn(2+)</name>
        <dbReference type="ChEBI" id="CHEBI:29105"/>
        <label>2</label>
    </ligand>
</feature>
<feature type="binding site" evidence="1">
    <location>
        <position position="53"/>
    </location>
    <ligand>
        <name>Zn(2+)</name>
        <dbReference type="ChEBI" id="CHEBI:29105"/>
        <label>1</label>
    </ligand>
</feature>
<feature type="binding site" evidence="1">
    <location>
        <position position="99"/>
    </location>
    <ligand>
        <name>Zn(2+)</name>
        <dbReference type="ChEBI" id="CHEBI:29105"/>
        <label>1</label>
    </ligand>
</feature>
<feature type="binding site" evidence="1">
    <location>
        <position position="99"/>
    </location>
    <ligand>
        <name>Zn(2+)</name>
        <dbReference type="ChEBI" id="CHEBI:29105"/>
        <label>2</label>
    </ligand>
</feature>
<feature type="binding site" evidence="1">
    <location>
        <position position="131"/>
    </location>
    <ligand>
        <name>Zn(2+)</name>
        <dbReference type="ChEBI" id="CHEBI:29105"/>
        <label>2</label>
    </ligand>
</feature>
<feature type="binding site" evidence="1">
    <location>
        <position position="234"/>
    </location>
    <ligand>
        <name>Zn(2+)</name>
        <dbReference type="ChEBI" id="CHEBI:29105"/>
        <label>2</label>
    </ligand>
</feature>
<feature type="binding site" evidence="1">
    <location>
        <position position="257"/>
    </location>
    <ligand>
        <name>Zn(2+)</name>
        <dbReference type="ChEBI" id="CHEBI:29105"/>
        <label>2</label>
    </ligand>
</feature>
<feature type="binding site" evidence="3">
    <location>
        <position position="368"/>
    </location>
    <ligand>
        <name>AMP</name>
        <dbReference type="ChEBI" id="CHEBI:456215"/>
    </ligand>
</feature>
<feature type="binding site" evidence="3">
    <location>
        <position position="404"/>
    </location>
    <ligand>
        <name>AMP</name>
        <dbReference type="ChEBI" id="CHEBI:456215"/>
    </ligand>
</feature>
<feature type="binding site" evidence="3">
    <location>
        <position position="409"/>
    </location>
    <ligand>
        <name>AMP</name>
        <dbReference type="ChEBI" id="CHEBI:456215"/>
    </ligand>
</feature>
<feature type="binding site" evidence="3">
    <location>
        <position position="432"/>
    </location>
    <ligand>
        <name>AMP</name>
        <dbReference type="ChEBI" id="CHEBI:456215"/>
    </ligand>
</feature>
<feature type="binding site" evidence="3">
    <location>
        <position position="515"/>
    </location>
    <ligand>
        <name>AMP</name>
        <dbReference type="ChEBI" id="CHEBI:456215"/>
    </ligand>
</feature>
<feature type="binding site" evidence="3">
    <location>
        <position position="521"/>
    </location>
    <ligand>
        <name>AMP</name>
        <dbReference type="ChEBI" id="CHEBI:456215"/>
    </ligand>
</feature>
<feature type="site" description="Transition state stabilizer" evidence="3">
    <location>
        <position position="132"/>
    </location>
</feature>
<feature type="site" description="Transition state stabilizer" evidence="3">
    <location>
        <position position="135"/>
    </location>
</feature>
<feature type="lipid moiety-binding region" description="GPI-anchor amidated serine" evidence="3">
    <location>
        <position position="564"/>
    </location>
</feature>
<feature type="glycosylation site" description="N-linked (GlcNAc...) asparagine" evidence="5">
    <location>
        <position position="167"/>
    </location>
</feature>
<feature type="glycosylation site" description="N-linked (GlcNAc...) asparagine" evidence="5">
    <location>
        <position position="347"/>
    </location>
</feature>
<feature type="glycosylation site" description="N-linked (GlcNAc...) asparagine" evidence="5">
    <location>
        <position position="361"/>
    </location>
</feature>
<feature type="glycosylation site" description="N-linked (GlcNAc...) asparagine" evidence="5">
    <location>
        <position position="418"/>
    </location>
</feature>
<feature type="glycosylation site" description="N-linked (GlcNAc...) asparagine" evidence="5">
    <location>
        <position position="532"/>
    </location>
</feature>
<feature type="disulfide bond" evidence="1">
    <location>
        <begin position="66"/>
        <end position="71"/>
    </location>
</feature>
<feature type="disulfide bond" evidence="1">
    <location>
        <begin position="367"/>
        <end position="372"/>
    </location>
</feature>
<feature type="disulfide bond" evidence="1">
    <location>
        <begin position="379"/>
        <end position="401"/>
    </location>
</feature>
<feature type="disulfide bond" evidence="1">
    <location>
        <begin position="491"/>
        <end position="494"/>
    </location>
</feature>
<keyword id="KW-1015">Disulfide bond</keyword>
<keyword id="KW-0325">Glycoprotein</keyword>
<keyword id="KW-0336">GPI-anchor</keyword>
<keyword id="KW-0378">Hydrolase</keyword>
<keyword id="KW-0449">Lipoprotein</keyword>
<keyword id="KW-0472">Membrane</keyword>
<keyword id="KW-0479">Metal-binding</keyword>
<keyword id="KW-0547">Nucleotide-binding</keyword>
<keyword id="KW-0732">Signal</keyword>
<keyword id="KW-0862">Zinc</keyword>
<sequence>MQTPKRRRGAQGCPRSSPSPPLLLLVRAVWFCAALSVAAGSFELTILHTNDVHARVEQTSRDSGKCTGQDCYGGVARRATKIRELRAKHRHVLLLDAGDQYQGTVWFNFFKGREVVKFMNSLRYDAMALGNHEFDNGLAGLLDPLLKHANFPILSANIRPKGSIASNISGYILPYKIINVGSEKVGIIGYTTKETPVLSNPGPYLEFRDEVEELQNHANKLTTLGVNKIIALGHSGFSEDQRIARKVKGVDVVVGGHTNTFLYTGSPPSTEVAAGNYPFMVQSDDGRQVPVVQAYAFGKYLGYLNVIFDDKGNVIKSSGNPILLNKDISEDQDIKAEVNKMKIQLHNYSSQEIGKTIVYLNGTTQACRFHECNLGNLICDAVIYNNVRHPDDNEWNHVSMCIVNGGGIRSPIDERTNNGTITLEELTAVLPFGGTFDLLQIKGSALKQAFEHSVHRHGEGMGELLQVSGIKVVYDLSRKPGSRVLSLNVLCTECRVPTYVPLEKEKTYKLLLPSFLAAGGDGYHMLKGDSSNHSSGNLDISIVGDYIKRMGKVFPAVEGRMIFSAGTLFQAQLFLTWGLCVSLLYFIL</sequence>